<reference key="1">
    <citation type="submission" date="2005-01" db="EMBL/GenBank/DDBJ databases">
        <authorList>
            <consortium name="NIH - Xenopus Gene Collection (XGC) project"/>
        </authorList>
    </citation>
    <scope>NUCLEOTIDE SEQUENCE [LARGE SCALE MRNA]</scope>
</reference>
<protein>
    <recommendedName>
        <fullName>Nectin-4</fullName>
    </recommendedName>
    <alternativeName>
        <fullName evidence="2">Nectin cell adhesion molecule 4</fullName>
    </alternativeName>
    <alternativeName>
        <fullName>Poliovirus receptor-related protein 4</fullName>
    </alternativeName>
</protein>
<proteinExistence type="evidence at transcript level"/>
<dbReference type="EMBL" id="BC089234">
    <property type="protein sequence ID" value="AAH89234.1"/>
    <property type="status" value="ALT_INIT"/>
    <property type="molecule type" value="mRNA"/>
</dbReference>
<dbReference type="SMR" id="Q5FWR8"/>
<dbReference type="FunCoup" id="Q5FWR8">
    <property type="interactions" value="235"/>
</dbReference>
<dbReference type="GlyCosmos" id="Q5FWR8">
    <property type="glycosylation" value="2 sites, No reported glycans"/>
</dbReference>
<dbReference type="InParanoid" id="Q5FWR8"/>
<dbReference type="Proteomes" id="UP000008143">
    <property type="component" value="Unplaced"/>
</dbReference>
<dbReference type="GO" id="GO:0005886">
    <property type="term" value="C:plasma membrane"/>
    <property type="evidence" value="ECO:0007669"/>
    <property type="project" value="UniProtKB-SubCell"/>
</dbReference>
<dbReference type="GO" id="GO:0007155">
    <property type="term" value="P:cell adhesion"/>
    <property type="evidence" value="ECO:0007669"/>
    <property type="project" value="UniProtKB-KW"/>
</dbReference>
<dbReference type="GO" id="GO:0046718">
    <property type="term" value="P:symbiont entry into host cell"/>
    <property type="evidence" value="ECO:0007669"/>
    <property type="project" value="InterPro"/>
</dbReference>
<dbReference type="CDD" id="cd07704">
    <property type="entry name" value="IgC1_2_Nectin-3-4_like"/>
    <property type="match status" value="1"/>
</dbReference>
<dbReference type="CDD" id="cd05888">
    <property type="entry name" value="IgV_1_Nectin-4_like"/>
    <property type="match status" value="1"/>
</dbReference>
<dbReference type="FunFam" id="2.60.40.10:FF:000560">
    <property type="entry name" value="Nectin cell adhesion molecule 4"/>
    <property type="match status" value="1"/>
</dbReference>
<dbReference type="Gene3D" id="2.60.40.10">
    <property type="entry name" value="Immunoglobulins"/>
    <property type="match status" value="3"/>
</dbReference>
<dbReference type="InterPro" id="IPR013162">
    <property type="entry name" value="CD80_C2-set"/>
</dbReference>
<dbReference type="InterPro" id="IPR007110">
    <property type="entry name" value="Ig-like_dom"/>
</dbReference>
<dbReference type="InterPro" id="IPR036179">
    <property type="entry name" value="Ig-like_dom_sf"/>
</dbReference>
<dbReference type="InterPro" id="IPR013783">
    <property type="entry name" value="Ig-like_fold"/>
</dbReference>
<dbReference type="InterPro" id="IPR003599">
    <property type="entry name" value="Ig_sub"/>
</dbReference>
<dbReference type="InterPro" id="IPR003598">
    <property type="entry name" value="Ig_sub2"/>
</dbReference>
<dbReference type="InterPro" id="IPR013106">
    <property type="entry name" value="Ig_V-set"/>
</dbReference>
<dbReference type="InterPro" id="IPR033320">
    <property type="entry name" value="IgC1_2_Nectin-3-4-like"/>
</dbReference>
<dbReference type="InterPro" id="IPR051427">
    <property type="entry name" value="Nectin/Nectin-like"/>
</dbReference>
<dbReference type="PANTHER" id="PTHR23277:SF11">
    <property type="entry name" value="NECTIN-4"/>
    <property type="match status" value="1"/>
</dbReference>
<dbReference type="PANTHER" id="PTHR23277">
    <property type="entry name" value="NECTIN-RELATED"/>
    <property type="match status" value="1"/>
</dbReference>
<dbReference type="Pfam" id="PF08205">
    <property type="entry name" value="C2-set_2"/>
    <property type="match status" value="1"/>
</dbReference>
<dbReference type="Pfam" id="PF13927">
    <property type="entry name" value="Ig_3"/>
    <property type="match status" value="1"/>
</dbReference>
<dbReference type="Pfam" id="PF07686">
    <property type="entry name" value="V-set"/>
    <property type="match status" value="1"/>
</dbReference>
<dbReference type="SMART" id="SM00409">
    <property type="entry name" value="IG"/>
    <property type="match status" value="3"/>
</dbReference>
<dbReference type="SMART" id="SM00408">
    <property type="entry name" value="IGc2"/>
    <property type="match status" value="2"/>
</dbReference>
<dbReference type="SUPFAM" id="SSF48726">
    <property type="entry name" value="Immunoglobulin"/>
    <property type="match status" value="2"/>
</dbReference>
<dbReference type="PROSITE" id="PS50835">
    <property type="entry name" value="IG_LIKE"/>
    <property type="match status" value="3"/>
</dbReference>
<gene>
    <name evidence="2" type="primary">nectin4</name>
    <name type="synonym">pvrl4</name>
</gene>
<feature type="signal peptide" evidence="3">
    <location>
        <begin position="1"/>
        <end position="30"/>
    </location>
</feature>
<feature type="chain" id="PRO_0000297675" description="Nectin-4">
    <location>
        <begin position="31"/>
        <end position="532"/>
    </location>
</feature>
<feature type="topological domain" description="Extracellular" evidence="3">
    <location>
        <begin position="31"/>
        <end position="344"/>
    </location>
</feature>
<feature type="transmembrane region" description="Helical" evidence="3">
    <location>
        <begin position="345"/>
        <end position="365"/>
    </location>
</feature>
<feature type="topological domain" description="Cytoplasmic" evidence="3">
    <location>
        <begin position="366"/>
        <end position="532"/>
    </location>
</feature>
<feature type="domain" description="Ig-like V-type">
    <location>
        <begin position="31"/>
        <end position="142"/>
    </location>
</feature>
<feature type="domain" description="Ig-like C2-type 1">
    <location>
        <begin position="146"/>
        <end position="235"/>
    </location>
</feature>
<feature type="domain" description="Ig-like C2-type 2">
    <location>
        <begin position="244"/>
        <end position="328"/>
    </location>
</feature>
<feature type="region of interest" description="Disordered" evidence="5">
    <location>
        <begin position="152"/>
        <end position="179"/>
    </location>
</feature>
<feature type="region of interest" description="Disordered" evidence="5">
    <location>
        <begin position="453"/>
        <end position="491"/>
    </location>
</feature>
<feature type="compositionally biased region" description="Acidic residues" evidence="5">
    <location>
        <begin position="461"/>
        <end position="474"/>
    </location>
</feature>
<feature type="glycosylation site" description="N-linked (GlcNAc...) asparagine" evidence="3">
    <location>
        <position position="189"/>
    </location>
</feature>
<feature type="glycosylation site" description="N-linked (GlcNAc...) asparagine" evidence="3">
    <location>
        <position position="282"/>
    </location>
</feature>
<feature type="disulfide bond" evidence="4">
    <location>
        <begin position="51"/>
        <end position="125"/>
    </location>
</feature>
<feature type="disulfide bond" evidence="4">
    <location>
        <begin position="169"/>
        <end position="221"/>
    </location>
</feature>
<feature type="disulfide bond" evidence="4">
    <location>
        <begin position="266"/>
        <end position="312"/>
    </location>
</feature>
<keyword id="KW-0130">Cell adhesion</keyword>
<keyword id="KW-1003">Cell membrane</keyword>
<keyword id="KW-1015">Disulfide bond</keyword>
<keyword id="KW-0325">Glycoprotein</keyword>
<keyword id="KW-0393">Immunoglobulin domain</keyword>
<keyword id="KW-0472">Membrane</keyword>
<keyword id="KW-1185">Reference proteome</keyword>
<keyword id="KW-0677">Repeat</keyword>
<keyword id="KW-0732">Signal</keyword>
<keyword id="KW-0812">Transmembrane</keyword>
<keyword id="KW-1133">Transmembrane helix</keyword>
<comment type="function">
    <text evidence="1">May be involved in cell adhesion.</text>
</comment>
<comment type="subcellular location">
    <subcellularLocation>
        <location evidence="6">Cell membrane</location>
        <topology evidence="6">Single-pass type I membrane protein</topology>
    </subcellularLocation>
</comment>
<comment type="similarity">
    <text evidence="6">Belongs to the nectin family.</text>
</comment>
<comment type="sequence caution" evidence="6">
    <conflict type="erroneous initiation">
        <sequence resource="EMBL-CDS" id="AAH89234"/>
    </conflict>
</comment>
<organism>
    <name type="scientific">Xenopus tropicalis</name>
    <name type="common">Western clawed frog</name>
    <name type="synonym">Silurana tropicalis</name>
    <dbReference type="NCBI Taxonomy" id="8364"/>
    <lineage>
        <taxon>Eukaryota</taxon>
        <taxon>Metazoa</taxon>
        <taxon>Chordata</taxon>
        <taxon>Craniata</taxon>
        <taxon>Vertebrata</taxon>
        <taxon>Euteleostomi</taxon>
        <taxon>Amphibia</taxon>
        <taxon>Batrachia</taxon>
        <taxon>Anura</taxon>
        <taxon>Pipoidea</taxon>
        <taxon>Pipidae</taxon>
        <taxon>Xenopodinae</taxon>
        <taxon>Xenopus</taxon>
        <taxon>Silurana</taxon>
    </lineage>
</organism>
<evidence type="ECO:0000250" key="1"/>
<evidence type="ECO:0000250" key="2">
    <source>
        <dbReference type="UniProtKB" id="Q96NY8"/>
    </source>
</evidence>
<evidence type="ECO:0000255" key="3"/>
<evidence type="ECO:0000255" key="4">
    <source>
        <dbReference type="PROSITE-ProRule" id="PRU00114"/>
    </source>
</evidence>
<evidence type="ECO:0000256" key="5">
    <source>
        <dbReference type="SAM" id="MobiDB-lite"/>
    </source>
</evidence>
<evidence type="ECO:0000305" key="6"/>
<name>NECT4_XENTR</name>
<accession>Q5FWR8</accession>
<sequence length="532" mass="57567">MGPLHGALLPPISVTVSLLILLLCAPGGRCGVVHTEKSMTAVLGTDVTMPCYYQAEAGEKVAQVVWLKKGANGQNMEIALLNTEYGANIFGAYEGRIKEKAPLDPADGGIVLRNAVQPDEGTYLCRVNTFPAGNFDAELELKVLVPPLPTLGPGPPLTEGEGKSLAASCTAEGNPAPTLTWETDVEGTNTTQKYEHPRSSSVTSEFYVVPTRRMNGKPLTCVVSHPGFQQEKRITHVLQVRYLAEVSVQGHEDGWFVGKEGATLQCQAGGNPAPKYEWSRLNGSLPAEVRMEGNTLQFLRALGAEDAGEYACRASNGIGTKSSTAIVSIAEHQATKIDLVSVSLGSVGILTAVLLVVLVITLLLVNRHHKRQTKQLSEKIEELSTLSREASRRRLNSTTASTDTRLQLEEAMHLRSGMHCDSLRDPSISSMMGEEADRRSYSTLTTLKETETQTELLSTVPDEEVKEDGEEPEQVEQSLEKEPNPTEPDGMVGVANQPFIKQGMAHFYQENGTLRAKPSANGIYINGRGHLV</sequence>